<protein>
    <recommendedName>
        <fullName evidence="1">tRNA modification GTPase MnmE</fullName>
        <ecNumber evidence="1">3.6.-.-</ecNumber>
    </recommendedName>
</protein>
<dbReference type="EC" id="3.6.-.-" evidence="1"/>
<dbReference type="EMBL" id="AE015451">
    <property type="protein sequence ID" value="AAN65639.1"/>
    <property type="molecule type" value="Genomic_DNA"/>
</dbReference>
<dbReference type="RefSeq" id="NP_742175.1">
    <property type="nucleotide sequence ID" value="NC_002947.4"/>
</dbReference>
<dbReference type="RefSeq" id="WP_010951424.1">
    <property type="nucleotide sequence ID" value="NZ_CP169744.1"/>
</dbReference>
<dbReference type="SMR" id="P0A175"/>
<dbReference type="STRING" id="160488.PP_0005"/>
<dbReference type="PaxDb" id="160488-PP_0005"/>
<dbReference type="GeneID" id="83683238"/>
<dbReference type="KEGG" id="ppu:PP_0005"/>
<dbReference type="PATRIC" id="fig|160488.4.peg.5"/>
<dbReference type="eggNOG" id="COG0486">
    <property type="taxonomic scope" value="Bacteria"/>
</dbReference>
<dbReference type="HOGENOM" id="CLU_019624_4_1_6"/>
<dbReference type="OrthoDB" id="9805918at2"/>
<dbReference type="PhylomeDB" id="P0A175"/>
<dbReference type="BioCyc" id="PPUT160488:G1G01-5-MONOMER"/>
<dbReference type="Proteomes" id="UP000000556">
    <property type="component" value="Chromosome"/>
</dbReference>
<dbReference type="GO" id="GO:0005829">
    <property type="term" value="C:cytosol"/>
    <property type="evidence" value="ECO:0007669"/>
    <property type="project" value="TreeGrafter"/>
</dbReference>
<dbReference type="GO" id="GO:0005525">
    <property type="term" value="F:GTP binding"/>
    <property type="evidence" value="ECO:0007669"/>
    <property type="project" value="UniProtKB-UniRule"/>
</dbReference>
<dbReference type="GO" id="GO:0003924">
    <property type="term" value="F:GTPase activity"/>
    <property type="evidence" value="ECO:0007669"/>
    <property type="project" value="UniProtKB-UniRule"/>
</dbReference>
<dbReference type="GO" id="GO:0046872">
    <property type="term" value="F:metal ion binding"/>
    <property type="evidence" value="ECO:0007669"/>
    <property type="project" value="UniProtKB-KW"/>
</dbReference>
<dbReference type="GO" id="GO:0030488">
    <property type="term" value="P:tRNA methylation"/>
    <property type="evidence" value="ECO:0007669"/>
    <property type="project" value="TreeGrafter"/>
</dbReference>
<dbReference type="GO" id="GO:0002098">
    <property type="term" value="P:tRNA wobble uridine modification"/>
    <property type="evidence" value="ECO:0007669"/>
    <property type="project" value="TreeGrafter"/>
</dbReference>
<dbReference type="CDD" id="cd04164">
    <property type="entry name" value="trmE"/>
    <property type="match status" value="1"/>
</dbReference>
<dbReference type="CDD" id="cd14858">
    <property type="entry name" value="TrmE_N"/>
    <property type="match status" value="1"/>
</dbReference>
<dbReference type="FunFam" id="3.30.1360.120:FF:000001">
    <property type="entry name" value="tRNA modification GTPase MnmE"/>
    <property type="match status" value="1"/>
</dbReference>
<dbReference type="FunFam" id="3.40.50.300:FF:000249">
    <property type="entry name" value="tRNA modification GTPase MnmE"/>
    <property type="match status" value="1"/>
</dbReference>
<dbReference type="Gene3D" id="3.40.50.300">
    <property type="entry name" value="P-loop containing nucleotide triphosphate hydrolases"/>
    <property type="match status" value="1"/>
</dbReference>
<dbReference type="Gene3D" id="3.30.1360.120">
    <property type="entry name" value="Probable tRNA modification gtpase trme, domain 1"/>
    <property type="match status" value="1"/>
</dbReference>
<dbReference type="Gene3D" id="1.20.120.430">
    <property type="entry name" value="tRNA modification GTPase MnmE domain 2"/>
    <property type="match status" value="1"/>
</dbReference>
<dbReference type="HAMAP" id="MF_00379">
    <property type="entry name" value="GTPase_MnmE"/>
    <property type="match status" value="1"/>
</dbReference>
<dbReference type="InterPro" id="IPR031168">
    <property type="entry name" value="G_TrmE"/>
</dbReference>
<dbReference type="InterPro" id="IPR006073">
    <property type="entry name" value="GTP-bd"/>
</dbReference>
<dbReference type="InterPro" id="IPR018948">
    <property type="entry name" value="GTP-bd_TrmE_N"/>
</dbReference>
<dbReference type="InterPro" id="IPR004520">
    <property type="entry name" value="GTPase_MnmE"/>
</dbReference>
<dbReference type="InterPro" id="IPR027368">
    <property type="entry name" value="MnmE_dom2"/>
</dbReference>
<dbReference type="InterPro" id="IPR025867">
    <property type="entry name" value="MnmE_helical"/>
</dbReference>
<dbReference type="InterPro" id="IPR027417">
    <property type="entry name" value="P-loop_NTPase"/>
</dbReference>
<dbReference type="InterPro" id="IPR005225">
    <property type="entry name" value="Small_GTP-bd"/>
</dbReference>
<dbReference type="InterPro" id="IPR027266">
    <property type="entry name" value="TrmE/GcvT_dom1"/>
</dbReference>
<dbReference type="NCBIfam" id="TIGR00450">
    <property type="entry name" value="mnmE_trmE_thdF"/>
    <property type="match status" value="1"/>
</dbReference>
<dbReference type="NCBIfam" id="NF003661">
    <property type="entry name" value="PRK05291.1-3"/>
    <property type="match status" value="1"/>
</dbReference>
<dbReference type="NCBIfam" id="TIGR00231">
    <property type="entry name" value="small_GTP"/>
    <property type="match status" value="1"/>
</dbReference>
<dbReference type="PANTHER" id="PTHR42714">
    <property type="entry name" value="TRNA MODIFICATION GTPASE GTPBP3"/>
    <property type="match status" value="1"/>
</dbReference>
<dbReference type="PANTHER" id="PTHR42714:SF2">
    <property type="entry name" value="TRNA MODIFICATION GTPASE GTPBP3, MITOCHONDRIAL"/>
    <property type="match status" value="1"/>
</dbReference>
<dbReference type="Pfam" id="PF01926">
    <property type="entry name" value="MMR_HSR1"/>
    <property type="match status" value="1"/>
</dbReference>
<dbReference type="Pfam" id="PF12631">
    <property type="entry name" value="MnmE_helical"/>
    <property type="match status" value="1"/>
</dbReference>
<dbReference type="Pfam" id="PF10396">
    <property type="entry name" value="TrmE_N"/>
    <property type="match status" value="1"/>
</dbReference>
<dbReference type="SUPFAM" id="SSF52540">
    <property type="entry name" value="P-loop containing nucleoside triphosphate hydrolases"/>
    <property type="match status" value="1"/>
</dbReference>
<dbReference type="SUPFAM" id="SSF116878">
    <property type="entry name" value="TrmE connector domain"/>
    <property type="match status" value="1"/>
</dbReference>
<dbReference type="PROSITE" id="PS51709">
    <property type="entry name" value="G_TRME"/>
    <property type="match status" value="1"/>
</dbReference>
<reference key="1">
    <citation type="journal article" date="2002" name="Environ. Microbiol.">
        <title>Complete genome sequence and comparative analysis of the metabolically versatile Pseudomonas putida KT2440.</title>
        <authorList>
            <person name="Nelson K.E."/>
            <person name="Weinel C."/>
            <person name="Paulsen I.T."/>
            <person name="Dodson R.J."/>
            <person name="Hilbert H."/>
            <person name="Martins dos Santos V.A.P."/>
            <person name="Fouts D.E."/>
            <person name="Gill S.R."/>
            <person name="Pop M."/>
            <person name="Holmes M."/>
            <person name="Brinkac L.M."/>
            <person name="Beanan M.J."/>
            <person name="DeBoy R.T."/>
            <person name="Daugherty S.C."/>
            <person name="Kolonay J.F."/>
            <person name="Madupu R."/>
            <person name="Nelson W.C."/>
            <person name="White O."/>
            <person name="Peterson J.D."/>
            <person name="Khouri H.M."/>
            <person name="Hance I."/>
            <person name="Chris Lee P."/>
            <person name="Holtzapple E.K."/>
            <person name="Scanlan D."/>
            <person name="Tran K."/>
            <person name="Moazzez A."/>
            <person name="Utterback T.R."/>
            <person name="Rizzo M."/>
            <person name="Lee K."/>
            <person name="Kosack D."/>
            <person name="Moestl D."/>
            <person name="Wedler H."/>
            <person name="Lauber J."/>
            <person name="Stjepandic D."/>
            <person name="Hoheisel J."/>
            <person name="Straetz M."/>
            <person name="Heim S."/>
            <person name="Kiewitz C."/>
            <person name="Eisen J.A."/>
            <person name="Timmis K.N."/>
            <person name="Duesterhoeft A."/>
            <person name="Tuemmler B."/>
            <person name="Fraser C.M."/>
        </authorList>
    </citation>
    <scope>NUCLEOTIDE SEQUENCE [LARGE SCALE GENOMIC DNA]</scope>
    <source>
        <strain>ATCC 47054 / DSM 6125 / CFBP 8728 / NCIMB 11950 / KT2440</strain>
    </source>
</reference>
<accession>P0A175</accession>
<accession>P25755</accession>
<keyword id="KW-0963">Cytoplasm</keyword>
<keyword id="KW-0342">GTP-binding</keyword>
<keyword id="KW-0378">Hydrolase</keyword>
<keyword id="KW-0460">Magnesium</keyword>
<keyword id="KW-0479">Metal-binding</keyword>
<keyword id="KW-0547">Nucleotide-binding</keyword>
<keyword id="KW-0630">Potassium</keyword>
<keyword id="KW-1185">Reference proteome</keyword>
<keyword id="KW-0819">tRNA processing</keyword>
<proteinExistence type="inferred from homology"/>
<comment type="function">
    <text evidence="1">Exhibits a very high intrinsic GTPase hydrolysis rate. Involved in the addition of a carboxymethylaminomethyl (cmnm) group at the wobble position (U34) of certain tRNAs, forming tRNA-cmnm(5)s(2)U34.</text>
</comment>
<comment type="cofactor">
    <cofactor evidence="1">
        <name>K(+)</name>
        <dbReference type="ChEBI" id="CHEBI:29103"/>
    </cofactor>
    <text evidence="1">Binds 1 potassium ion per subunit.</text>
</comment>
<comment type="subunit">
    <text evidence="1">Homodimer. Heterotetramer of two MnmE and two MnmG subunits.</text>
</comment>
<comment type="subcellular location">
    <subcellularLocation>
        <location evidence="1">Cytoplasm</location>
    </subcellularLocation>
</comment>
<comment type="similarity">
    <text evidence="1">Belongs to the TRAFAC class TrmE-Era-EngA-EngB-Septin-like GTPase superfamily. TrmE GTPase family.</text>
</comment>
<evidence type="ECO:0000255" key="1">
    <source>
        <dbReference type="HAMAP-Rule" id="MF_00379"/>
    </source>
</evidence>
<organism>
    <name type="scientific">Pseudomonas putida (strain ATCC 47054 / DSM 6125 / CFBP 8728 / NCIMB 11950 / KT2440)</name>
    <dbReference type="NCBI Taxonomy" id="160488"/>
    <lineage>
        <taxon>Bacteria</taxon>
        <taxon>Pseudomonadati</taxon>
        <taxon>Pseudomonadota</taxon>
        <taxon>Gammaproteobacteria</taxon>
        <taxon>Pseudomonadales</taxon>
        <taxon>Pseudomonadaceae</taxon>
        <taxon>Pseudomonas</taxon>
    </lineage>
</organism>
<feature type="chain" id="PRO_0000188905" description="tRNA modification GTPase MnmE">
    <location>
        <begin position="1"/>
        <end position="456"/>
    </location>
</feature>
<feature type="domain" description="TrmE-type G">
    <location>
        <begin position="216"/>
        <end position="379"/>
    </location>
</feature>
<feature type="binding site" evidence="1">
    <location>
        <position position="24"/>
    </location>
    <ligand>
        <name>(6S)-5-formyl-5,6,7,8-tetrahydrofolate</name>
        <dbReference type="ChEBI" id="CHEBI:57457"/>
    </ligand>
</feature>
<feature type="binding site" evidence="1">
    <location>
        <position position="81"/>
    </location>
    <ligand>
        <name>(6S)-5-formyl-5,6,7,8-tetrahydrofolate</name>
        <dbReference type="ChEBI" id="CHEBI:57457"/>
    </ligand>
</feature>
<feature type="binding site" evidence="1">
    <location>
        <position position="120"/>
    </location>
    <ligand>
        <name>(6S)-5-formyl-5,6,7,8-tetrahydrofolate</name>
        <dbReference type="ChEBI" id="CHEBI:57457"/>
    </ligand>
</feature>
<feature type="binding site" evidence="1">
    <location>
        <begin position="226"/>
        <end position="231"/>
    </location>
    <ligand>
        <name>GTP</name>
        <dbReference type="ChEBI" id="CHEBI:37565"/>
    </ligand>
</feature>
<feature type="binding site" evidence="1">
    <location>
        <position position="226"/>
    </location>
    <ligand>
        <name>K(+)</name>
        <dbReference type="ChEBI" id="CHEBI:29103"/>
    </ligand>
</feature>
<feature type="binding site" evidence="1">
    <location>
        <position position="230"/>
    </location>
    <ligand>
        <name>Mg(2+)</name>
        <dbReference type="ChEBI" id="CHEBI:18420"/>
    </ligand>
</feature>
<feature type="binding site" evidence="1">
    <location>
        <begin position="245"/>
        <end position="251"/>
    </location>
    <ligand>
        <name>GTP</name>
        <dbReference type="ChEBI" id="CHEBI:37565"/>
    </ligand>
</feature>
<feature type="binding site" evidence="1">
    <location>
        <position position="245"/>
    </location>
    <ligand>
        <name>K(+)</name>
        <dbReference type="ChEBI" id="CHEBI:29103"/>
    </ligand>
</feature>
<feature type="binding site" evidence="1">
    <location>
        <position position="247"/>
    </location>
    <ligand>
        <name>K(+)</name>
        <dbReference type="ChEBI" id="CHEBI:29103"/>
    </ligand>
</feature>
<feature type="binding site" evidence="1">
    <location>
        <position position="250"/>
    </location>
    <ligand>
        <name>K(+)</name>
        <dbReference type="ChEBI" id="CHEBI:29103"/>
    </ligand>
</feature>
<feature type="binding site" evidence="1">
    <location>
        <position position="251"/>
    </location>
    <ligand>
        <name>Mg(2+)</name>
        <dbReference type="ChEBI" id="CHEBI:18420"/>
    </ligand>
</feature>
<feature type="binding site" evidence="1">
    <location>
        <begin position="270"/>
        <end position="273"/>
    </location>
    <ligand>
        <name>GTP</name>
        <dbReference type="ChEBI" id="CHEBI:37565"/>
    </ligand>
</feature>
<feature type="binding site" evidence="1">
    <location>
        <begin position="335"/>
        <end position="338"/>
    </location>
    <ligand>
        <name>GTP</name>
        <dbReference type="ChEBI" id="CHEBI:37565"/>
    </ligand>
</feature>
<feature type="binding site" evidence="1">
    <location>
        <position position="456"/>
    </location>
    <ligand>
        <name>(6S)-5-formyl-5,6,7,8-tetrahydrofolate</name>
        <dbReference type="ChEBI" id="CHEBI:57457"/>
    </ligand>
</feature>
<sequence length="456" mass="48963">MNTVRETIAAIATAQGRGGVGIVRLSGPLAAKAGLLITGRTLTPRHAHYGPFRDDEGLVLDEGIALFFPGPNSFTGEDVLELQGHGGPVVLDMLLQRCVQVGCRLARPGEFSERAFLNDKLDLAQAEAIADLIEASSSQAARNALRSLQGEFSRRVHSLTEALIALRIYVEAAIDFPEEEIDFLADGHVLSMLDAVRSELSTVQREAGQGALLRDGMTVVIAGRPNAGKSSLLNQLAGREAAIVTDIAGTTRDILREHIHIDGMPLHVVDTAGLRDTDDHVEKIGVERALKAIGEADRVLLVVDSTAPEASDPFALWPEFLAQRPDPAKVTLIRNKADLSGERVALEQCDDGHVTITLSAKGDDTGLQLLRDHLKGCMGYEQTAESGFSARRRHLDALRQASEHLEHGRAQLTLAGAGELLAEDLRQAQHALGEITGAFSSDDLLGRIFSSFCIGK</sequence>
<gene>
    <name evidence="1" type="primary">mnmE</name>
    <name evidence="1" type="synonym">thdF</name>
    <name evidence="1" type="synonym">trmE</name>
    <name type="ordered locus">PP_0005</name>
</gene>
<name>MNME_PSEPK</name>